<organism>
    <name type="scientific">Oryzias latipes</name>
    <name type="common">Japanese rice fish</name>
    <name type="synonym">Japanese killifish</name>
    <dbReference type="NCBI Taxonomy" id="8090"/>
    <lineage>
        <taxon>Eukaryota</taxon>
        <taxon>Metazoa</taxon>
        <taxon>Chordata</taxon>
        <taxon>Craniata</taxon>
        <taxon>Vertebrata</taxon>
        <taxon>Euteleostomi</taxon>
        <taxon>Actinopterygii</taxon>
        <taxon>Neopterygii</taxon>
        <taxon>Teleostei</taxon>
        <taxon>Neoteleostei</taxon>
        <taxon>Acanthomorphata</taxon>
        <taxon>Ovalentaria</taxon>
        <taxon>Atherinomorphae</taxon>
        <taxon>Beloniformes</taxon>
        <taxon>Adrianichthyidae</taxon>
        <taxon>Oryziinae</taxon>
        <taxon>Oryzias</taxon>
    </lineage>
</organism>
<feature type="chain" id="PRO_0000440958" description="Protein FAM53B">
    <location>
        <begin position="1"/>
        <end position="407"/>
    </location>
</feature>
<feature type="region of interest" description="Disordered" evidence="3">
    <location>
        <begin position="204"/>
        <end position="286"/>
    </location>
</feature>
<feature type="region of interest" description="Disordered" evidence="3">
    <location>
        <begin position="306"/>
        <end position="380"/>
    </location>
</feature>
<feature type="short sequence motif" description="Nuclear localization signal" evidence="1">
    <location>
        <begin position="272"/>
        <end position="275"/>
    </location>
</feature>
<feature type="compositionally biased region" description="Basic and acidic residues" evidence="3">
    <location>
        <begin position="264"/>
        <end position="281"/>
    </location>
</feature>
<feature type="compositionally biased region" description="Basic and acidic residues" evidence="3">
    <location>
        <begin position="327"/>
        <end position="339"/>
    </location>
</feature>
<feature type="compositionally biased region" description="Acidic residues" evidence="3">
    <location>
        <begin position="357"/>
        <end position="369"/>
    </location>
</feature>
<gene>
    <name evidence="2" type="primary">fam53b</name>
    <name evidence="5" type="synonym">smp</name>
</gene>
<keyword id="KW-0539">Nucleus</keyword>
<keyword id="KW-1185">Reference proteome</keyword>
<keyword id="KW-0879">Wnt signaling pathway</keyword>
<accession>H2M146</accession>
<sequence>MVIILKKTLEKKGADDVIASRANLGPFQAQTMSQGAALFSCGLMETSRWHDSCSIRQRPVGTSLESLWDVLPEVHSGSAQWDWDVGSASSTLTSLLQDLSLTESSSHSTAPPSKKQCRSLSCSDELGGCRSTWRPQGSRVWTTVEKRRCHSGGSVQRSSGGNLQLGFPAMQRSFSFSLPARSNAVEPPSFTQRLPYAFTSLTHSSSMPLASDPPAQPLSLSNEQICFPEPHGPSPSSSPDSTPELERRSGQGGLARSRSQPCELNEKKIGVKRRRPDDTHKQRPSLDLAKMTQKLHSFHSLSCPGITGEETCESEATPPPRSVQQRDAVDSPAHEHNLKDFQPQEGDFNGNKSSDPITEEVDWNCDDGTPETSNGKDTEPLWVGLCSMKRDVYQLGGELDIEQIERN</sequence>
<proteinExistence type="evidence at transcript level"/>
<evidence type="ECO:0000250" key="1">
    <source>
        <dbReference type="UniProtKB" id="F1QN48"/>
    </source>
</evidence>
<evidence type="ECO:0000250" key="2">
    <source>
        <dbReference type="UniProtKB" id="Q14153"/>
    </source>
</evidence>
<evidence type="ECO:0000256" key="3">
    <source>
        <dbReference type="SAM" id="MobiDB-lite"/>
    </source>
</evidence>
<evidence type="ECO:0000269" key="4">
    <source>
    </source>
</evidence>
<evidence type="ECO:0000303" key="5">
    <source>
    </source>
</evidence>
<evidence type="ECO:0000305" key="6"/>
<name>FA53B_ORYLA</name>
<protein>
    <recommendedName>
        <fullName evidence="2">Protein FAM53B</fullName>
    </recommendedName>
    <alternativeName>
        <fullName evidence="5">Protein simplet</fullName>
    </alternativeName>
</protein>
<dbReference type="EMBL" id="BAAF04015981">
    <property type="status" value="NOT_ANNOTATED_CDS"/>
    <property type="molecule type" value="Genomic_DNA"/>
</dbReference>
<dbReference type="EMBL" id="BAAF04015982">
    <property type="status" value="NOT_ANNOTATED_CDS"/>
    <property type="molecule type" value="Genomic_DNA"/>
</dbReference>
<dbReference type="EMBL" id="BAAF04015983">
    <property type="status" value="NOT_ANNOTATED_CDS"/>
    <property type="molecule type" value="Genomic_DNA"/>
</dbReference>
<dbReference type="EMBL" id="BAAF04015984">
    <property type="status" value="NOT_ANNOTATED_CDS"/>
    <property type="molecule type" value="Genomic_DNA"/>
</dbReference>
<dbReference type="FunCoup" id="H2M146">
    <property type="interactions" value="1233"/>
</dbReference>
<dbReference type="STRING" id="8090.ENSORLP00000035136"/>
<dbReference type="eggNOG" id="ENOG502QQM7">
    <property type="taxonomic scope" value="Eukaryota"/>
</dbReference>
<dbReference type="HOGENOM" id="CLU_054215_2_1_1"/>
<dbReference type="InParanoid" id="H2M146"/>
<dbReference type="TreeFam" id="TF332095"/>
<dbReference type="Proteomes" id="UP000001038">
    <property type="component" value="Unplaced"/>
</dbReference>
<dbReference type="Proteomes" id="UP000265180">
    <property type="component" value="Chromosome 9"/>
</dbReference>
<dbReference type="Proteomes" id="UP000265200">
    <property type="component" value="Chromosome 9"/>
</dbReference>
<dbReference type="GO" id="GO:0005634">
    <property type="term" value="C:nucleus"/>
    <property type="evidence" value="ECO:0000250"/>
    <property type="project" value="UniProtKB"/>
</dbReference>
<dbReference type="GO" id="GO:0090263">
    <property type="term" value="P:positive regulation of canonical Wnt signaling pathway"/>
    <property type="evidence" value="ECO:0000250"/>
    <property type="project" value="UniProtKB"/>
</dbReference>
<dbReference type="GO" id="GO:0006606">
    <property type="term" value="P:protein import into nucleus"/>
    <property type="evidence" value="ECO:0000318"/>
    <property type="project" value="GO_Central"/>
</dbReference>
<dbReference type="GO" id="GO:0060828">
    <property type="term" value="P:regulation of canonical Wnt signaling pathway"/>
    <property type="evidence" value="ECO:0000250"/>
    <property type="project" value="UniProtKB"/>
</dbReference>
<dbReference type="GO" id="GO:0016055">
    <property type="term" value="P:Wnt signaling pathway"/>
    <property type="evidence" value="ECO:0007669"/>
    <property type="project" value="UniProtKB-KW"/>
</dbReference>
<dbReference type="InterPro" id="IPR029356">
    <property type="entry name" value="FAM53"/>
</dbReference>
<dbReference type="PANTHER" id="PTHR28567">
    <property type="entry name" value="PROTEIN FAM53A-LIKE ISOFORM X1"/>
    <property type="match status" value="1"/>
</dbReference>
<dbReference type="PANTHER" id="PTHR28567:SF1">
    <property type="entry name" value="PROTEIN FAM53B"/>
    <property type="match status" value="1"/>
</dbReference>
<dbReference type="Pfam" id="PF15242">
    <property type="entry name" value="FAM53"/>
    <property type="match status" value="1"/>
</dbReference>
<reference key="1">
    <citation type="journal article" date="2007" name="Nature">
        <title>The medaka draft genome and insights into vertebrate genome evolution.</title>
        <authorList>
            <person name="Kasahara M."/>
            <person name="Naruse K."/>
            <person name="Sasaki S."/>
            <person name="Nakatani Y."/>
            <person name="Qu W."/>
            <person name="Ahsan B."/>
            <person name="Yamada T."/>
            <person name="Nagayasu Y."/>
            <person name="Doi K."/>
            <person name="Kasai Y."/>
            <person name="Jindo T."/>
            <person name="Kobayashi D."/>
            <person name="Shimada A."/>
            <person name="Toyoda A."/>
            <person name="Kuroki Y."/>
            <person name="Fujiyama A."/>
            <person name="Sasaki T."/>
            <person name="Shimizu A."/>
            <person name="Asakawa S."/>
            <person name="Shimizu N."/>
            <person name="Hashimoto S."/>
            <person name="Yang J."/>
            <person name="Lee Y."/>
            <person name="Matsushima K."/>
            <person name="Sugano S."/>
            <person name="Sakaizumi M."/>
            <person name="Narita T."/>
            <person name="Ohishi K."/>
            <person name="Haga S."/>
            <person name="Ohta F."/>
            <person name="Nomoto H."/>
            <person name="Nogata K."/>
            <person name="Morishita T."/>
            <person name="Endo T."/>
            <person name="Shin-I T."/>
            <person name="Takeda H."/>
            <person name="Morishita S."/>
            <person name="Kohara Y."/>
        </authorList>
    </citation>
    <scope>NUCLEOTIDE SEQUENCE [LARGE SCALE GENOMIC DNA]</scope>
    <source>
        <strain>Hd-rR</strain>
    </source>
</reference>
<reference key="2">
    <citation type="journal article" date="2006" name="Development">
        <title>Medaka simplet (FAM53B) belongs to a family of novel vertebrate genes controlling cell proliferation.</title>
        <authorList>
            <person name="Thermes V."/>
            <person name="Candal E."/>
            <person name="Alunni A."/>
            <person name="Serin G."/>
            <person name="Bourrat F."/>
            <person name="Joly J.S."/>
        </authorList>
    </citation>
    <scope>DISRUPTION PHENOTYPE</scope>
    <scope>TISSUE SPECIFICITY</scope>
</reference>
<comment type="function">
    <text evidence="1">Acts as a regulator of Wnt signaling pathway by regulating beta-catenin (ctnnb1) nuclear localization.</text>
</comment>
<comment type="subunit">
    <text evidence="2">Interacts with ctnnb1.</text>
</comment>
<comment type="subcellular location">
    <subcellularLocation>
        <location evidence="1">Nucleus</location>
    </subcellularLocation>
</comment>
<comment type="tissue specificity">
    <text evidence="4">Predominantly expressed in proliferating cells throughout embryonic development.</text>
</comment>
<comment type="disruption phenotype">
    <text evidence="4">Delayed epiboly and reduced embryonic size.</text>
</comment>
<comment type="similarity">
    <text evidence="6">Belongs to the FAM53 family.</text>
</comment>